<name>TRUD_PYRAR</name>
<gene>
    <name evidence="1" type="primary">truD</name>
    <name type="ordered locus">Pars_1684</name>
</gene>
<proteinExistence type="inferred from homology"/>
<evidence type="ECO:0000255" key="1">
    <source>
        <dbReference type="HAMAP-Rule" id="MF_01082"/>
    </source>
</evidence>
<sequence length="413" mass="45923">MREAPPFDKALGMYYYVTDTCPSGGVIKKSPEDFVVEEVLADGTVVAVGGVELRPRVGGWTWIHVVKRNVDTIRLMIRLAKALGVSPREVSVGGIKDTRAVASHIISVRGAVKGLPEIPGVKFLGMWSMDRPMSPSEIYGNRFTIVLRDVERVDCAVEALEALKSAAVPNYYGYQRFGTIRPVSHLLGRALLRKSPEEFFDAMFCKIFEHESAAAKKARELACRGEYQKALETFPRRFVEERAFLRRLAQGYDMWNAIMGIPLQILRIYVEAAQSYLFNRFLSARLELGPLDKPLEGDLVEVGGQVAYYAEGLGGDVVLPVAGAGVRMPRGKVGEALLKVMKEEGVDPAAFLKMPRGLKAYGSYRRARLEVGDFSYAVRGRDVELRFVLPRGSYATVLLREAVKPAEPYRHGF</sequence>
<protein>
    <recommendedName>
        <fullName evidence="1">Probable tRNA pseudouridine synthase D</fullName>
        <ecNumber evidence="1">5.4.99.27</ecNumber>
    </recommendedName>
    <alternativeName>
        <fullName evidence="1">tRNA pseudouridine(13) synthase</fullName>
    </alternativeName>
    <alternativeName>
        <fullName evidence="1">tRNA pseudouridylate synthase D</fullName>
    </alternativeName>
    <alternativeName>
        <fullName evidence="1">tRNA-uridine isomerase D</fullName>
    </alternativeName>
</protein>
<feature type="chain" id="PRO_1000084761" description="Probable tRNA pseudouridine synthase D">
    <location>
        <begin position="1"/>
        <end position="413"/>
    </location>
</feature>
<feature type="domain" description="TRUD" evidence="1">
    <location>
        <begin position="167"/>
        <end position="370"/>
    </location>
</feature>
<feature type="active site" description="Nucleophile" evidence="1">
    <location>
        <position position="97"/>
    </location>
</feature>
<keyword id="KW-0413">Isomerase</keyword>
<keyword id="KW-0819">tRNA processing</keyword>
<accession>A4WLG8</accession>
<organism>
    <name type="scientific">Pyrobaculum arsenaticum (strain DSM 13514 / JCM 11321 / PZ6)</name>
    <dbReference type="NCBI Taxonomy" id="340102"/>
    <lineage>
        <taxon>Archaea</taxon>
        <taxon>Thermoproteota</taxon>
        <taxon>Thermoprotei</taxon>
        <taxon>Thermoproteales</taxon>
        <taxon>Thermoproteaceae</taxon>
        <taxon>Pyrobaculum</taxon>
    </lineage>
</organism>
<comment type="function">
    <text evidence="1">Could be responsible for synthesis of pseudouridine from uracil-13 in transfer RNAs.</text>
</comment>
<comment type="catalytic activity">
    <reaction evidence="1">
        <text>uridine(13) in tRNA = pseudouridine(13) in tRNA</text>
        <dbReference type="Rhea" id="RHEA:42540"/>
        <dbReference type="Rhea" id="RHEA-COMP:10105"/>
        <dbReference type="Rhea" id="RHEA-COMP:10106"/>
        <dbReference type="ChEBI" id="CHEBI:65314"/>
        <dbReference type="ChEBI" id="CHEBI:65315"/>
        <dbReference type="EC" id="5.4.99.27"/>
    </reaction>
</comment>
<comment type="similarity">
    <text evidence="1">Belongs to the pseudouridine synthase TruD family.</text>
</comment>
<reference key="1">
    <citation type="submission" date="2007-04" db="EMBL/GenBank/DDBJ databases">
        <title>Complete sequence of Pyrobaculum arsenaticum DSM 13514.</title>
        <authorList>
            <consortium name="US DOE Joint Genome Institute"/>
            <person name="Copeland A."/>
            <person name="Lucas S."/>
            <person name="Lapidus A."/>
            <person name="Barry K."/>
            <person name="Glavina del Rio T."/>
            <person name="Dalin E."/>
            <person name="Tice H."/>
            <person name="Pitluck S."/>
            <person name="Chain P."/>
            <person name="Malfatti S."/>
            <person name="Shin M."/>
            <person name="Vergez L."/>
            <person name="Schmutz J."/>
            <person name="Larimer F."/>
            <person name="Land M."/>
            <person name="Hauser L."/>
            <person name="Kyrpides N."/>
            <person name="Mikhailova N."/>
            <person name="Cozen A.E."/>
            <person name="Fitz-Gibbon S.T."/>
            <person name="House C.H."/>
            <person name="Saltikov C."/>
            <person name="Lowe T.M."/>
            <person name="Richardson P."/>
        </authorList>
    </citation>
    <scope>NUCLEOTIDE SEQUENCE [LARGE SCALE GENOMIC DNA]</scope>
    <source>
        <strain>ATCC 700994 / DSM 13514 / JCM 11321 / PZ6</strain>
    </source>
</reference>
<dbReference type="EC" id="5.4.99.27" evidence="1"/>
<dbReference type="EMBL" id="CP000660">
    <property type="protein sequence ID" value="ABP51235.1"/>
    <property type="molecule type" value="Genomic_DNA"/>
</dbReference>
<dbReference type="RefSeq" id="WP_011901141.1">
    <property type="nucleotide sequence ID" value="NC_009376.1"/>
</dbReference>
<dbReference type="SMR" id="A4WLG8"/>
<dbReference type="STRING" id="340102.Pars_1684"/>
<dbReference type="GeneID" id="5054260"/>
<dbReference type="KEGG" id="pas:Pars_1684"/>
<dbReference type="HOGENOM" id="CLU_005281_4_1_2"/>
<dbReference type="OrthoDB" id="1798at2157"/>
<dbReference type="PhylomeDB" id="A4WLG8"/>
<dbReference type="Proteomes" id="UP000001567">
    <property type="component" value="Chromosome"/>
</dbReference>
<dbReference type="GO" id="GO:0003723">
    <property type="term" value="F:RNA binding"/>
    <property type="evidence" value="ECO:0007669"/>
    <property type="project" value="InterPro"/>
</dbReference>
<dbReference type="GO" id="GO:0160150">
    <property type="term" value="F:tRNA pseudouridine(13) synthase activity"/>
    <property type="evidence" value="ECO:0007669"/>
    <property type="project" value="UniProtKB-EC"/>
</dbReference>
<dbReference type="GO" id="GO:0031119">
    <property type="term" value="P:tRNA pseudouridine synthesis"/>
    <property type="evidence" value="ECO:0007669"/>
    <property type="project" value="UniProtKB-UniRule"/>
</dbReference>
<dbReference type="Gene3D" id="1.10.1510.30">
    <property type="match status" value="1"/>
</dbReference>
<dbReference type="Gene3D" id="3.30.70.3160">
    <property type="match status" value="1"/>
</dbReference>
<dbReference type="Gene3D" id="3.30.2350.20">
    <property type="entry name" value="TruD, catalytic domain"/>
    <property type="match status" value="1"/>
</dbReference>
<dbReference type="HAMAP" id="MF_01082">
    <property type="entry name" value="TruD"/>
    <property type="match status" value="1"/>
</dbReference>
<dbReference type="InterPro" id="IPR020103">
    <property type="entry name" value="PsdUridine_synth_cat_dom_sf"/>
</dbReference>
<dbReference type="InterPro" id="IPR001656">
    <property type="entry name" value="PsdUridine_synth_TruD"/>
</dbReference>
<dbReference type="InterPro" id="IPR011760">
    <property type="entry name" value="PsdUridine_synth_TruD_insert"/>
</dbReference>
<dbReference type="InterPro" id="IPR042214">
    <property type="entry name" value="TruD_catalytic"/>
</dbReference>
<dbReference type="NCBIfam" id="TIGR00094">
    <property type="entry name" value="tRNA_TruD_broad"/>
    <property type="match status" value="1"/>
</dbReference>
<dbReference type="PANTHER" id="PTHR13326:SF21">
    <property type="entry name" value="PSEUDOURIDYLATE SYNTHASE PUS7L"/>
    <property type="match status" value="1"/>
</dbReference>
<dbReference type="PANTHER" id="PTHR13326">
    <property type="entry name" value="TRNA PSEUDOURIDINE SYNTHASE D"/>
    <property type="match status" value="1"/>
</dbReference>
<dbReference type="Pfam" id="PF01142">
    <property type="entry name" value="TruD"/>
    <property type="match status" value="1"/>
</dbReference>
<dbReference type="PIRSF" id="PIRSF037016">
    <property type="entry name" value="Pseudouridin_synth_euk_prd"/>
    <property type="match status" value="1"/>
</dbReference>
<dbReference type="SUPFAM" id="SSF55120">
    <property type="entry name" value="Pseudouridine synthase"/>
    <property type="match status" value="1"/>
</dbReference>
<dbReference type="PROSITE" id="PS50984">
    <property type="entry name" value="TRUD"/>
    <property type="match status" value="1"/>
</dbReference>